<feature type="chain" id="PRO_0000114609" description="Alanine racemase">
    <location>
        <begin position="1"/>
        <end position="120"/>
    </location>
</feature>
<feature type="active site" description="Proton acceptor; specific for L-alanine" evidence="1">
    <location>
        <position position="24"/>
    </location>
</feature>
<feature type="non-consecutive residues" evidence="3">
    <location>
        <begin position="51"/>
        <end position="52"/>
    </location>
</feature>
<feature type="non-consecutive residues" evidence="3">
    <location>
        <begin position="74"/>
        <end position="75"/>
    </location>
</feature>
<evidence type="ECO:0000250" key="1">
    <source>
        <dbReference type="UniProtKB" id="P10724"/>
    </source>
</evidence>
<evidence type="ECO:0000269" key="2">
    <source>
    </source>
</evidence>
<evidence type="ECO:0000303" key="3">
    <source>
    </source>
</evidence>
<evidence type="ECO:0000305" key="4"/>
<reference evidence="4" key="1">
    <citation type="journal article" date="2002" name="Comp. Biochem. Physiol.">
        <title>Purification, properties, and partial amino acid sequences of alanine racemase from the muscle of the black tiger prawn Penaeus monodon.</title>
        <authorList>
            <person name="Yoshikawa N."/>
            <person name="Dhomae N."/>
            <person name="Takio K."/>
            <person name="Abe H."/>
        </authorList>
    </citation>
    <scope>PROTEIN SEQUENCE</scope>
    <scope>CHARACTERIZATION</scope>
    <scope>SUBUNIT</scope>
    <source>
        <tissue evidence="2">Muscle</tissue>
    </source>
</reference>
<protein>
    <recommendedName>
        <fullName>Alanine racemase</fullName>
        <ecNumber>5.1.1.1</ecNumber>
    </recommendedName>
</protein>
<organism>
    <name type="scientific">Penaeus monodon</name>
    <name type="common">Giant tiger prawn</name>
    <dbReference type="NCBI Taxonomy" id="6687"/>
    <lineage>
        <taxon>Eukaryota</taxon>
        <taxon>Metazoa</taxon>
        <taxon>Ecdysozoa</taxon>
        <taxon>Arthropoda</taxon>
        <taxon>Crustacea</taxon>
        <taxon>Multicrustacea</taxon>
        <taxon>Malacostraca</taxon>
        <taxon>Eumalacostraca</taxon>
        <taxon>Eucarida</taxon>
        <taxon>Decapoda</taxon>
        <taxon>Dendrobranchiata</taxon>
        <taxon>Penaeoidea</taxon>
        <taxon>Penaeidae</taxon>
        <taxon>Penaeus</taxon>
    </lineage>
</organism>
<keyword id="KW-0903">Direct protein sequencing</keyword>
<keyword id="KW-0413">Isomerase</keyword>
<keyword id="KW-0663">Pyridoxal phosphate</keyword>
<sequence>QPAFSVVTRPTFYKLLKAGRDIGYDGTYTTSEDEWIANFTTGWSDQLSRRLSTRLPRLYTRNGKIVRICPSLEYLFLEASEPFTSRGITRHVAATTGCVQDLGTDLDFIRPGGAITGLCS</sequence>
<accession>P83944</accession>
<dbReference type="EC" id="5.1.1.1"/>
<dbReference type="SMR" id="P83944"/>
<dbReference type="OrthoDB" id="186866at2759"/>
<dbReference type="GO" id="GO:0008784">
    <property type="term" value="F:alanine racemase activity"/>
    <property type="evidence" value="ECO:0000314"/>
    <property type="project" value="UniProtKB"/>
</dbReference>
<dbReference type="GO" id="GO:0018366">
    <property type="term" value="P:chiral amino acid racemization"/>
    <property type="evidence" value="ECO:0000314"/>
    <property type="project" value="UniProtKB"/>
</dbReference>
<dbReference type="Gene3D" id="2.40.37.10">
    <property type="entry name" value="Lyase, Ornithine Decarboxylase, Chain A, domain 1"/>
    <property type="match status" value="1"/>
</dbReference>
<dbReference type="InterPro" id="IPR009006">
    <property type="entry name" value="Ala_racemase/Decarboxylase_C"/>
</dbReference>
<dbReference type="InterPro" id="IPR011079">
    <property type="entry name" value="Ala_racemase_C"/>
</dbReference>
<dbReference type="Pfam" id="PF00842">
    <property type="entry name" value="Ala_racemase_C"/>
    <property type="match status" value="1"/>
</dbReference>
<dbReference type="SMART" id="SM01005">
    <property type="entry name" value="Ala_racemase_C"/>
    <property type="match status" value="1"/>
</dbReference>
<dbReference type="SUPFAM" id="SSF50621">
    <property type="entry name" value="Alanine racemase C-terminal domain-like"/>
    <property type="match status" value="1"/>
</dbReference>
<proteinExistence type="evidence at protein level"/>
<name>ALR_PENMO</name>
<comment type="function">
    <text>Highly specific to D- and L-alanine and does not catalyze the racemization of other amino acids.</text>
</comment>
<comment type="catalytic activity">
    <reaction evidence="2">
        <text>L-alanine = D-alanine</text>
        <dbReference type="Rhea" id="RHEA:20249"/>
        <dbReference type="ChEBI" id="CHEBI:57416"/>
        <dbReference type="ChEBI" id="CHEBI:57972"/>
        <dbReference type="EC" id="5.1.1.1"/>
    </reaction>
</comment>
<comment type="cofactor">
    <cofactor>
        <name>pyridoxal 5'-phosphate</name>
        <dbReference type="ChEBI" id="CHEBI:597326"/>
    </cofactor>
</comment>
<comment type="biophysicochemical properties">
    <phDependence>
        <text>Optimum pH is 9.5 in the direction of L to D, and 10 for the reverse direction.</text>
    </phDependence>
    <temperatureDependence>
        <text>Optimum temperature is 37 degrees Celsius for both directions.</text>
    </temperatureDependence>
</comment>
<comment type="subunit">
    <text evidence="2">Homodimer.</text>
</comment>
<comment type="similarity">
    <text evidence="4">Belongs to the alanine racemase family.</text>
</comment>